<organism>
    <name type="scientific">Histophilus somni (strain 129Pt)</name>
    <name type="common">Haemophilus somnus</name>
    <dbReference type="NCBI Taxonomy" id="205914"/>
    <lineage>
        <taxon>Bacteria</taxon>
        <taxon>Pseudomonadati</taxon>
        <taxon>Pseudomonadota</taxon>
        <taxon>Gammaproteobacteria</taxon>
        <taxon>Pasteurellales</taxon>
        <taxon>Pasteurellaceae</taxon>
        <taxon>Histophilus</taxon>
    </lineage>
</organism>
<gene>
    <name type="ordered locus">HS_1668</name>
</gene>
<feature type="chain" id="PRO_1000045039" description="Probable Fe(2+)-trafficking protein">
    <location>
        <begin position="1"/>
        <end position="91"/>
    </location>
</feature>
<accession>Q0I514</accession>
<keyword id="KW-0408">Iron</keyword>
<name>FETP_HISS1</name>
<reference key="1">
    <citation type="journal article" date="2007" name="J. Bacteriol.">
        <title>Complete genome sequence of Haemophilus somnus (Histophilus somni) strain 129Pt and comparison to Haemophilus ducreyi 35000HP and Haemophilus influenzae Rd.</title>
        <authorList>
            <person name="Challacombe J.F."/>
            <person name="Duncan A.J."/>
            <person name="Brettin T.S."/>
            <person name="Bruce D."/>
            <person name="Chertkov O."/>
            <person name="Detter J.C."/>
            <person name="Han C.S."/>
            <person name="Misra M."/>
            <person name="Richardson P."/>
            <person name="Tapia R."/>
            <person name="Thayer N."/>
            <person name="Xie G."/>
            <person name="Inzana T.J."/>
        </authorList>
    </citation>
    <scope>NUCLEOTIDE SEQUENCE [LARGE SCALE GENOMIC DNA]</scope>
    <source>
        <strain>129Pt</strain>
    </source>
</reference>
<sequence length="91" mass="10801">MARNVFCTYLNQEAEGLDFQLYPGELGKRIFDNISKQAWAEWMKKQTMLVNEKKLNMMNSEHRQLLEQEMTNFLFEGKDVHIEGYVPPTEK</sequence>
<protein>
    <recommendedName>
        <fullName evidence="1">Probable Fe(2+)-trafficking protein</fullName>
    </recommendedName>
</protein>
<dbReference type="EMBL" id="CP000436">
    <property type="protein sequence ID" value="ABI25936.1"/>
    <property type="molecule type" value="Genomic_DNA"/>
</dbReference>
<dbReference type="SMR" id="Q0I514"/>
<dbReference type="KEGG" id="hso:HS_1668"/>
<dbReference type="eggNOG" id="COG2924">
    <property type="taxonomic scope" value="Bacteria"/>
</dbReference>
<dbReference type="HOGENOM" id="CLU_170994_0_0_6"/>
<dbReference type="GO" id="GO:0005829">
    <property type="term" value="C:cytosol"/>
    <property type="evidence" value="ECO:0007669"/>
    <property type="project" value="TreeGrafter"/>
</dbReference>
<dbReference type="GO" id="GO:0005506">
    <property type="term" value="F:iron ion binding"/>
    <property type="evidence" value="ECO:0007669"/>
    <property type="project" value="UniProtKB-UniRule"/>
</dbReference>
<dbReference type="GO" id="GO:0034599">
    <property type="term" value="P:cellular response to oxidative stress"/>
    <property type="evidence" value="ECO:0007669"/>
    <property type="project" value="TreeGrafter"/>
</dbReference>
<dbReference type="FunFam" id="1.10.3880.10:FF:000001">
    <property type="entry name" value="Probable Fe(2+)-trafficking protein"/>
    <property type="match status" value="1"/>
</dbReference>
<dbReference type="Gene3D" id="1.10.3880.10">
    <property type="entry name" value="Fe(II) trafficking protein YggX"/>
    <property type="match status" value="1"/>
</dbReference>
<dbReference type="HAMAP" id="MF_00686">
    <property type="entry name" value="Fe_traffic_YggX"/>
    <property type="match status" value="1"/>
</dbReference>
<dbReference type="InterPro" id="IPR007457">
    <property type="entry name" value="Fe_traffick_prot_YggX"/>
</dbReference>
<dbReference type="InterPro" id="IPR036766">
    <property type="entry name" value="Fe_traffick_prot_YggX_sf"/>
</dbReference>
<dbReference type="NCBIfam" id="NF003817">
    <property type="entry name" value="PRK05408.1"/>
    <property type="match status" value="1"/>
</dbReference>
<dbReference type="PANTHER" id="PTHR36965">
    <property type="entry name" value="FE(2+)-TRAFFICKING PROTEIN-RELATED"/>
    <property type="match status" value="1"/>
</dbReference>
<dbReference type="PANTHER" id="PTHR36965:SF1">
    <property type="entry name" value="FE(2+)-TRAFFICKING PROTEIN-RELATED"/>
    <property type="match status" value="1"/>
</dbReference>
<dbReference type="Pfam" id="PF04362">
    <property type="entry name" value="Iron_traffic"/>
    <property type="match status" value="1"/>
</dbReference>
<dbReference type="PIRSF" id="PIRSF029827">
    <property type="entry name" value="Fe_traffic_YggX"/>
    <property type="match status" value="1"/>
</dbReference>
<dbReference type="SUPFAM" id="SSF111148">
    <property type="entry name" value="YggX-like"/>
    <property type="match status" value="1"/>
</dbReference>
<evidence type="ECO:0000255" key="1">
    <source>
        <dbReference type="HAMAP-Rule" id="MF_00686"/>
    </source>
</evidence>
<comment type="function">
    <text evidence="1">Could be a mediator in iron transactions between iron acquisition and iron-requiring processes, such as synthesis and/or repair of Fe-S clusters in biosynthetic enzymes.</text>
</comment>
<comment type="similarity">
    <text evidence="1">Belongs to the Fe(2+)-trafficking protein family.</text>
</comment>
<proteinExistence type="inferred from homology"/>